<reference key="1">
    <citation type="journal article" date="2001" name="Nature">
        <title>Genome sequence of enterohaemorrhagic Escherichia coli O157:H7.</title>
        <authorList>
            <person name="Perna N.T."/>
            <person name="Plunkett G. III"/>
            <person name="Burland V."/>
            <person name="Mau B."/>
            <person name="Glasner J.D."/>
            <person name="Rose D.J."/>
            <person name="Mayhew G.F."/>
            <person name="Evans P.S."/>
            <person name="Gregor J."/>
            <person name="Kirkpatrick H.A."/>
            <person name="Posfai G."/>
            <person name="Hackett J."/>
            <person name="Klink S."/>
            <person name="Boutin A."/>
            <person name="Shao Y."/>
            <person name="Miller L."/>
            <person name="Grotbeck E.J."/>
            <person name="Davis N.W."/>
            <person name="Lim A."/>
            <person name="Dimalanta E.T."/>
            <person name="Potamousis K."/>
            <person name="Apodaca J."/>
            <person name="Anantharaman T.S."/>
            <person name="Lin J."/>
            <person name="Yen G."/>
            <person name="Schwartz D.C."/>
            <person name="Welch R.A."/>
            <person name="Blattner F.R."/>
        </authorList>
    </citation>
    <scope>NUCLEOTIDE SEQUENCE [LARGE SCALE GENOMIC DNA]</scope>
    <source>
        <strain>O157:H7 / EDL933 / ATCC 700927 / EHEC</strain>
    </source>
</reference>
<reference key="2">
    <citation type="journal article" date="2001" name="DNA Res.">
        <title>Complete genome sequence of enterohemorrhagic Escherichia coli O157:H7 and genomic comparison with a laboratory strain K-12.</title>
        <authorList>
            <person name="Hayashi T."/>
            <person name="Makino K."/>
            <person name="Ohnishi M."/>
            <person name="Kurokawa K."/>
            <person name="Ishii K."/>
            <person name="Yokoyama K."/>
            <person name="Han C.-G."/>
            <person name="Ohtsubo E."/>
            <person name="Nakayama K."/>
            <person name="Murata T."/>
            <person name="Tanaka M."/>
            <person name="Tobe T."/>
            <person name="Iida T."/>
            <person name="Takami H."/>
            <person name="Honda T."/>
            <person name="Sasakawa C."/>
            <person name="Ogasawara N."/>
            <person name="Yasunaga T."/>
            <person name="Kuhara S."/>
            <person name="Shiba T."/>
            <person name="Hattori M."/>
            <person name="Shinagawa H."/>
        </authorList>
    </citation>
    <scope>NUCLEOTIDE SEQUENCE [LARGE SCALE GENOMIC DNA]</scope>
    <source>
        <strain>O157:H7 / Sakai / RIMD 0509952 / EHEC</strain>
    </source>
</reference>
<sequence>MFRQLKKNLVATLIAAMTIGQVAPAFADSADTLPDMGTSAGSTLSIGQEMQMGDYYVRQLRGSAPLINDPLLTQYINSLGMRLVSHANSVKTPFHFFLINNDEINAFAFFGGNVVLHSALFRYSDNESQLASVMAHEISHVTQRHLARAMEDQQRNAPLTWVGALGSILLAMASPQAGMAALTGTLAGTRQGMISFTQQNEQEADRIGIQVLQRSGFDPQAMPTFLEKLLDQARYSSRPPEILLTHPLPESRLADARNRANQMRPMVVQSSEDFYLAKARTLGMYNSGRNQLTSDLLDEWAKGNVRQQRAAQYGRALQAMEANKYDEARKTLQPLLAAEPGNAWYLDLATDIDLGQNKANEAINRLKNARDLRTNPVLQLNLANAYLQGGQPQEAANILNRYTFNNKDDSNGWDLLAQAEAALNNRDQELAARAEGYALAGRLDQAISLLSSASSQVKLGSLQQARYDARIDQLRQLQERFKPYTKM</sequence>
<feature type="signal peptide" evidence="1">
    <location>
        <begin position="1"/>
        <end position="27"/>
    </location>
</feature>
<feature type="chain" id="PRO_0000035697" description="Beta-barrel assembly-enhancing protease">
    <location>
        <begin position="28"/>
        <end position="487"/>
    </location>
</feature>
<feature type="repeat" description="TPR 1">
    <location>
        <begin position="309"/>
        <end position="342"/>
    </location>
</feature>
<feature type="repeat" description="TPR 2">
    <location>
        <begin position="344"/>
        <end position="376"/>
    </location>
</feature>
<feature type="repeat" description="TPR 3">
    <location>
        <begin position="377"/>
        <end position="409"/>
    </location>
</feature>
<feature type="repeat" description="TPR 4">
    <location>
        <begin position="427"/>
        <end position="460"/>
    </location>
</feature>
<feature type="active site" evidence="1">
    <location>
        <position position="137"/>
    </location>
</feature>
<feature type="active site" description="Proton donor" evidence="1">
    <location>
        <position position="205"/>
    </location>
</feature>
<feature type="binding site" evidence="1">
    <location>
        <position position="136"/>
    </location>
    <ligand>
        <name>Zn(2+)</name>
        <dbReference type="ChEBI" id="CHEBI:29105"/>
        <note>catalytic</note>
    </ligand>
</feature>
<feature type="binding site" evidence="1">
    <location>
        <position position="140"/>
    </location>
    <ligand>
        <name>Zn(2+)</name>
        <dbReference type="ChEBI" id="CHEBI:29105"/>
        <note>catalytic</note>
    </ligand>
</feature>
<feature type="binding site" evidence="1">
    <location>
        <position position="201"/>
    </location>
    <ligand>
        <name>Zn(2+)</name>
        <dbReference type="ChEBI" id="CHEBI:29105"/>
        <note>catalytic</note>
    </ligand>
</feature>
<keyword id="KW-0378">Hydrolase</keyword>
<keyword id="KW-0479">Metal-binding</keyword>
<keyword id="KW-0482">Metalloprotease</keyword>
<keyword id="KW-0574">Periplasm</keyword>
<keyword id="KW-0645">Protease</keyword>
<keyword id="KW-1185">Reference proteome</keyword>
<keyword id="KW-0677">Repeat</keyword>
<keyword id="KW-0732">Signal</keyword>
<keyword id="KW-0802">TPR repeat</keyword>
<keyword id="KW-0862">Zinc</keyword>
<proteinExistence type="inferred from homology"/>
<accession>Q8XAD2</accession>
<name>BEPA_ECO57</name>
<organism>
    <name type="scientific">Escherichia coli O157:H7</name>
    <dbReference type="NCBI Taxonomy" id="83334"/>
    <lineage>
        <taxon>Bacteria</taxon>
        <taxon>Pseudomonadati</taxon>
        <taxon>Pseudomonadota</taxon>
        <taxon>Gammaproteobacteria</taxon>
        <taxon>Enterobacterales</taxon>
        <taxon>Enterobacteriaceae</taxon>
        <taxon>Escherichia</taxon>
    </lineage>
</organism>
<dbReference type="EC" id="3.4.-.-" evidence="1"/>
<dbReference type="EMBL" id="AE005174">
    <property type="protein sequence ID" value="AAG57604.1"/>
    <property type="molecule type" value="Genomic_DNA"/>
</dbReference>
<dbReference type="EMBL" id="BA000007">
    <property type="protein sequence ID" value="BAB36779.1"/>
    <property type="molecule type" value="Genomic_DNA"/>
</dbReference>
<dbReference type="PIR" id="D91048">
    <property type="entry name" value="D91048"/>
</dbReference>
<dbReference type="PIR" id="H85892">
    <property type="entry name" value="H85892"/>
</dbReference>
<dbReference type="RefSeq" id="NP_311383.1">
    <property type="nucleotide sequence ID" value="NC_002695.1"/>
</dbReference>
<dbReference type="RefSeq" id="WP_000489651.1">
    <property type="nucleotide sequence ID" value="NZ_VOAI01000001.1"/>
</dbReference>
<dbReference type="SMR" id="Q8XAD2"/>
<dbReference type="STRING" id="155864.Z3757"/>
<dbReference type="MEROPS" id="M48.023"/>
<dbReference type="KEGG" id="ece:Z3757"/>
<dbReference type="KEGG" id="ecs:ECs_3356"/>
<dbReference type="PATRIC" id="fig|386585.9.peg.3505"/>
<dbReference type="eggNOG" id="COG4783">
    <property type="taxonomic scope" value="Bacteria"/>
</dbReference>
<dbReference type="HOGENOM" id="CLU_030556_0_1_6"/>
<dbReference type="OMA" id="HLSQRHF"/>
<dbReference type="Proteomes" id="UP000000558">
    <property type="component" value="Chromosome"/>
</dbReference>
<dbReference type="Proteomes" id="UP000002519">
    <property type="component" value="Chromosome"/>
</dbReference>
<dbReference type="GO" id="GO:0016020">
    <property type="term" value="C:membrane"/>
    <property type="evidence" value="ECO:0007669"/>
    <property type="project" value="InterPro"/>
</dbReference>
<dbReference type="GO" id="GO:0042597">
    <property type="term" value="C:periplasmic space"/>
    <property type="evidence" value="ECO:0007669"/>
    <property type="project" value="UniProtKB-SubCell"/>
</dbReference>
<dbReference type="GO" id="GO:0004222">
    <property type="term" value="F:metalloendopeptidase activity"/>
    <property type="evidence" value="ECO:0007669"/>
    <property type="project" value="InterPro"/>
</dbReference>
<dbReference type="GO" id="GO:0008270">
    <property type="term" value="F:zinc ion binding"/>
    <property type="evidence" value="ECO:0007669"/>
    <property type="project" value="UniProtKB-UniRule"/>
</dbReference>
<dbReference type="GO" id="GO:0061077">
    <property type="term" value="P:chaperone-mediated protein folding"/>
    <property type="evidence" value="ECO:0007669"/>
    <property type="project" value="InterPro"/>
</dbReference>
<dbReference type="GO" id="GO:0051603">
    <property type="term" value="P:proteolysis involved in protein catabolic process"/>
    <property type="evidence" value="ECO:0007669"/>
    <property type="project" value="TreeGrafter"/>
</dbReference>
<dbReference type="CDD" id="cd07333">
    <property type="entry name" value="M48C_bepA_like"/>
    <property type="match status" value="1"/>
</dbReference>
<dbReference type="FunFam" id="3.30.2010.10:FF:000006">
    <property type="entry name" value="Beta-barrel assembly-enhancing protease"/>
    <property type="match status" value="1"/>
</dbReference>
<dbReference type="Gene3D" id="3.30.2010.10">
    <property type="entry name" value="Metalloproteases ('zincins'), catalytic domain"/>
    <property type="match status" value="1"/>
</dbReference>
<dbReference type="Gene3D" id="1.25.40.10">
    <property type="entry name" value="Tetratricopeptide repeat domain"/>
    <property type="match status" value="1"/>
</dbReference>
<dbReference type="HAMAP" id="MF_00997">
    <property type="entry name" value="Protease_BepA"/>
    <property type="match status" value="1"/>
</dbReference>
<dbReference type="InterPro" id="IPR051156">
    <property type="entry name" value="Mito/Outer_Membr_Metalloprot"/>
</dbReference>
<dbReference type="InterPro" id="IPR001915">
    <property type="entry name" value="Peptidase_M48"/>
</dbReference>
<dbReference type="InterPro" id="IPR030873">
    <property type="entry name" value="Protease_BepA"/>
</dbReference>
<dbReference type="InterPro" id="IPR011990">
    <property type="entry name" value="TPR-like_helical_dom_sf"/>
</dbReference>
<dbReference type="PANTHER" id="PTHR22726">
    <property type="entry name" value="METALLOENDOPEPTIDASE OMA1"/>
    <property type="match status" value="1"/>
</dbReference>
<dbReference type="PANTHER" id="PTHR22726:SF1">
    <property type="entry name" value="METALLOENDOPEPTIDASE OMA1, MITOCHONDRIAL"/>
    <property type="match status" value="1"/>
</dbReference>
<dbReference type="Pfam" id="PF01435">
    <property type="entry name" value="Peptidase_M48"/>
    <property type="match status" value="1"/>
</dbReference>
<dbReference type="Pfam" id="PF14559">
    <property type="entry name" value="TPR_19"/>
    <property type="match status" value="1"/>
</dbReference>
<dbReference type="SUPFAM" id="SSF48452">
    <property type="entry name" value="TPR-like"/>
    <property type="match status" value="1"/>
</dbReference>
<comment type="function">
    <text evidence="1">Functions both as a chaperone and a metalloprotease. Maintains the integrity of the outer membrane by promoting either the assembly or the elimination of outer membrane proteins, depending on their folding state.</text>
</comment>
<comment type="cofactor">
    <cofactor evidence="1">
        <name>Zn(2+)</name>
        <dbReference type="ChEBI" id="CHEBI:29105"/>
    </cofactor>
    <text evidence="1">Binds 1 zinc ion per subunit.</text>
</comment>
<comment type="subcellular location">
    <subcellularLocation>
        <location evidence="1">Periplasm</location>
    </subcellularLocation>
</comment>
<comment type="similarity">
    <text evidence="1">Belongs to the peptidase M48 family. BepA subfamily.</text>
</comment>
<protein>
    <recommendedName>
        <fullName evidence="1">Beta-barrel assembly-enhancing protease</fullName>
        <ecNumber evidence="1">3.4.-.-</ecNumber>
    </recommendedName>
</protein>
<gene>
    <name evidence="1" type="primary">bepA</name>
    <name type="synonym">yfgC</name>
    <name type="ordered locus">Z3757</name>
    <name type="ordered locus">ECs3356</name>
</gene>
<evidence type="ECO:0000255" key="1">
    <source>
        <dbReference type="HAMAP-Rule" id="MF_00997"/>
    </source>
</evidence>